<name>FOLD_CLOPE</name>
<gene>
    <name evidence="1" type="primary">folD</name>
    <name type="ordered locus">CPE1823</name>
</gene>
<sequence length="277" mass="30337">MDKILSGKTVAIDIKGQIKSYTEELKASGKSLKISSILVGDDGGSVYYQNFQEKLANNLGIDFEKIKLDESISEENLKLKIEELNKDDSVNGIMLLLPLPKHIDERAVTNLIDADKDLDCLSEVSVGRFYKGEKCFMPCTPNSVITLLKAYNIEIEGKEVVIIGRSNIVGKPLFQMFLNENATVTVCHSRTKNLKEVCKRADILVVAIGRANFIDSSYVREGAVVIDVGTSEVNGKITGDVNFDDVYDKASLITPVPGGVGSLTTTLLLKNVCKELD</sequence>
<organism>
    <name type="scientific">Clostridium perfringens (strain 13 / Type A)</name>
    <dbReference type="NCBI Taxonomy" id="195102"/>
    <lineage>
        <taxon>Bacteria</taxon>
        <taxon>Bacillati</taxon>
        <taxon>Bacillota</taxon>
        <taxon>Clostridia</taxon>
        <taxon>Eubacteriales</taxon>
        <taxon>Clostridiaceae</taxon>
        <taxon>Clostridium</taxon>
    </lineage>
</organism>
<protein>
    <recommendedName>
        <fullName evidence="1">Bifunctional protein FolD</fullName>
    </recommendedName>
    <domain>
        <recommendedName>
            <fullName evidence="1">Methylenetetrahydrofolate dehydrogenase</fullName>
            <ecNumber evidence="1">1.5.1.5</ecNumber>
        </recommendedName>
    </domain>
    <domain>
        <recommendedName>
            <fullName evidence="1">Methenyltetrahydrofolate cyclohydrolase</fullName>
            <ecNumber evidence="1">3.5.4.9</ecNumber>
        </recommendedName>
    </domain>
</protein>
<accession>Q8XJD7</accession>
<feature type="chain" id="PRO_0000268317" description="Bifunctional protein FolD">
    <location>
        <begin position="1"/>
        <end position="277"/>
    </location>
</feature>
<feature type="binding site" evidence="1">
    <location>
        <begin position="164"/>
        <end position="166"/>
    </location>
    <ligand>
        <name>NADP(+)</name>
        <dbReference type="ChEBI" id="CHEBI:58349"/>
    </ligand>
</feature>
<feature type="binding site" evidence="1">
    <location>
        <position position="189"/>
    </location>
    <ligand>
        <name>NADP(+)</name>
        <dbReference type="ChEBI" id="CHEBI:58349"/>
    </ligand>
</feature>
<feature type="binding site" evidence="1">
    <location>
        <position position="230"/>
    </location>
    <ligand>
        <name>NADP(+)</name>
        <dbReference type="ChEBI" id="CHEBI:58349"/>
    </ligand>
</feature>
<evidence type="ECO:0000255" key="1">
    <source>
        <dbReference type="HAMAP-Rule" id="MF_01576"/>
    </source>
</evidence>
<proteinExistence type="inferred from homology"/>
<keyword id="KW-0028">Amino-acid biosynthesis</keyword>
<keyword id="KW-0368">Histidine biosynthesis</keyword>
<keyword id="KW-0378">Hydrolase</keyword>
<keyword id="KW-0486">Methionine biosynthesis</keyword>
<keyword id="KW-0511">Multifunctional enzyme</keyword>
<keyword id="KW-0521">NADP</keyword>
<keyword id="KW-0554">One-carbon metabolism</keyword>
<keyword id="KW-0560">Oxidoreductase</keyword>
<keyword id="KW-0658">Purine biosynthesis</keyword>
<keyword id="KW-1185">Reference proteome</keyword>
<comment type="function">
    <text evidence="1">Catalyzes the oxidation of 5,10-methylenetetrahydrofolate to 5,10-methenyltetrahydrofolate and then the hydrolysis of 5,10-methenyltetrahydrofolate to 10-formyltetrahydrofolate.</text>
</comment>
<comment type="catalytic activity">
    <reaction evidence="1">
        <text>(6R)-5,10-methylene-5,6,7,8-tetrahydrofolate + NADP(+) = (6R)-5,10-methenyltetrahydrofolate + NADPH</text>
        <dbReference type="Rhea" id="RHEA:22812"/>
        <dbReference type="ChEBI" id="CHEBI:15636"/>
        <dbReference type="ChEBI" id="CHEBI:57455"/>
        <dbReference type="ChEBI" id="CHEBI:57783"/>
        <dbReference type="ChEBI" id="CHEBI:58349"/>
        <dbReference type="EC" id="1.5.1.5"/>
    </reaction>
</comment>
<comment type="catalytic activity">
    <reaction evidence="1">
        <text>(6R)-5,10-methenyltetrahydrofolate + H2O = (6R)-10-formyltetrahydrofolate + H(+)</text>
        <dbReference type="Rhea" id="RHEA:23700"/>
        <dbReference type="ChEBI" id="CHEBI:15377"/>
        <dbReference type="ChEBI" id="CHEBI:15378"/>
        <dbReference type="ChEBI" id="CHEBI:57455"/>
        <dbReference type="ChEBI" id="CHEBI:195366"/>
        <dbReference type="EC" id="3.5.4.9"/>
    </reaction>
</comment>
<comment type="pathway">
    <text evidence="1">One-carbon metabolism; tetrahydrofolate interconversion.</text>
</comment>
<comment type="subunit">
    <text evidence="1">Homodimer.</text>
</comment>
<comment type="similarity">
    <text evidence="1">Belongs to the tetrahydrofolate dehydrogenase/cyclohydrolase family.</text>
</comment>
<dbReference type="EC" id="1.5.1.5" evidence="1"/>
<dbReference type="EC" id="3.5.4.9" evidence="1"/>
<dbReference type="EMBL" id="BA000016">
    <property type="protein sequence ID" value="BAB81529.1"/>
    <property type="molecule type" value="Genomic_DNA"/>
</dbReference>
<dbReference type="RefSeq" id="WP_011010624.1">
    <property type="nucleotide sequence ID" value="NC_003366.1"/>
</dbReference>
<dbReference type="SMR" id="Q8XJD7"/>
<dbReference type="STRING" id="195102.gene:10491087"/>
<dbReference type="KEGG" id="cpe:CPE1823"/>
<dbReference type="HOGENOM" id="CLU_034045_2_1_9"/>
<dbReference type="UniPathway" id="UPA00193"/>
<dbReference type="Proteomes" id="UP000000818">
    <property type="component" value="Chromosome"/>
</dbReference>
<dbReference type="GO" id="GO:0005829">
    <property type="term" value="C:cytosol"/>
    <property type="evidence" value="ECO:0007669"/>
    <property type="project" value="TreeGrafter"/>
</dbReference>
<dbReference type="GO" id="GO:0004477">
    <property type="term" value="F:methenyltetrahydrofolate cyclohydrolase activity"/>
    <property type="evidence" value="ECO:0007669"/>
    <property type="project" value="UniProtKB-UniRule"/>
</dbReference>
<dbReference type="GO" id="GO:0004488">
    <property type="term" value="F:methylenetetrahydrofolate dehydrogenase (NADP+) activity"/>
    <property type="evidence" value="ECO:0007669"/>
    <property type="project" value="UniProtKB-UniRule"/>
</dbReference>
<dbReference type="GO" id="GO:0000105">
    <property type="term" value="P:L-histidine biosynthetic process"/>
    <property type="evidence" value="ECO:0007669"/>
    <property type="project" value="UniProtKB-KW"/>
</dbReference>
<dbReference type="GO" id="GO:0009086">
    <property type="term" value="P:methionine biosynthetic process"/>
    <property type="evidence" value="ECO:0007669"/>
    <property type="project" value="UniProtKB-KW"/>
</dbReference>
<dbReference type="GO" id="GO:0006164">
    <property type="term" value="P:purine nucleotide biosynthetic process"/>
    <property type="evidence" value="ECO:0007669"/>
    <property type="project" value="UniProtKB-KW"/>
</dbReference>
<dbReference type="GO" id="GO:0035999">
    <property type="term" value="P:tetrahydrofolate interconversion"/>
    <property type="evidence" value="ECO:0007669"/>
    <property type="project" value="UniProtKB-UniRule"/>
</dbReference>
<dbReference type="CDD" id="cd01080">
    <property type="entry name" value="NAD_bind_m-THF_DH_Cyclohyd"/>
    <property type="match status" value="1"/>
</dbReference>
<dbReference type="FunFam" id="3.40.50.720:FF:000094">
    <property type="entry name" value="Bifunctional protein FolD"/>
    <property type="match status" value="1"/>
</dbReference>
<dbReference type="FunFam" id="3.40.50.10860:FF:000005">
    <property type="entry name" value="C-1-tetrahydrofolate synthase, cytoplasmic, putative"/>
    <property type="match status" value="1"/>
</dbReference>
<dbReference type="Gene3D" id="3.40.50.10860">
    <property type="entry name" value="Leucine Dehydrogenase, chain A, domain 1"/>
    <property type="match status" value="1"/>
</dbReference>
<dbReference type="Gene3D" id="3.40.50.720">
    <property type="entry name" value="NAD(P)-binding Rossmann-like Domain"/>
    <property type="match status" value="1"/>
</dbReference>
<dbReference type="HAMAP" id="MF_01576">
    <property type="entry name" value="THF_DHG_CYH"/>
    <property type="match status" value="1"/>
</dbReference>
<dbReference type="InterPro" id="IPR046346">
    <property type="entry name" value="Aminoacid_DH-like_N_sf"/>
</dbReference>
<dbReference type="InterPro" id="IPR036291">
    <property type="entry name" value="NAD(P)-bd_dom_sf"/>
</dbReference>
<dbReference type="InterPro" id="IPR000672">
    <property type="entry name" value="THF_DH/CycHdrlase"/>
</dbReference>
<dbReference type="InterPro" id="IPR020630">
    <property type="entry name" value="THF_DH/CycHdrlase_cat_dom"/>
</dbReference>
<dbReference type="InterPro" id="IPR020631">
    <property type="entry name" value="THF_DH/CycHdrlase_NAD-bd_dom"/>
</dbReference>
<dbReference type="NCBIfam" id="NF010769">
    <property type="entry name" value="PRK14172.1"/>
    <property type="match status" value="1"/>
</dbReference>
<dbReference type="PANTHER" id="PTHR48099:SF5">
    <property type="entry name" value="C-1-TETRAHYDROFOLATE SYNTHASE, CYTOPLASMIC"/>
    <property type="match status" value="1"/>
</dbReference>
<dbReference type="PANTHER" id="PTHR48099">
    <property type="entry name" value="C-1-TETRAHYDROFOLATE SYNTHASE, CYTOPLASMIC-RELATED"/>
    <property type="match status" value="1"/>
</dbReference>
<dbReference type="Pfam" id="PF00763">
    <property type="entry name" value="THF_DHG_CYH"/>
    <property type="match status" value="1"/>
</dbReference>
<dbReference type="Pfam" id="PF02882">
    <property type="entry name" value="THF_DHG_CYH_C"/>
    <property type="match status" value="1"/>
</dbReference>
<dbReference type="PRINTS" id="PR00085">
    <property type="entry name" value="THFDHDRGNASE"/>
</dbReference>
<dbReference type="SUPFAM" id="SSF53223">
    <property type="entry name" value="Aminoacid dehydrogenase-like, N-terminal domain"/>
    <property type="match status" value="1"/>
</dbReference>
<dbReference type="SUPFAM" id="SSF51735">
    <property type="entry name" value="NAD(P)-binding Rossmann-fold domains"/>
    <property type="match status" value="1"/>
</dbReference>
<reference key="1">
    <citation type="journal article" date="2002" name="Proc. Natl. Acad. Sci. U.S.A.">
        <title>Complete genome sequence of Clostridium perfringens, an anaerobic flesh-eater.</title>
        <authorList>
            <person name="Shimizu T."/>
            <person name="Ohtani K."/>
            <person name="Hirakawa H."/>
            <person name="Ohshima K."/>
            <person name="Yamashita A."/>
            <person name="Shiba T."/>
            <person name="Ogasawara N."/>
            <person name="Hattori M."/>
            <person name="Kuhara S."/>
            <person name="Hayashi H."/>
        </authorList>
    </citation>
    <scope>NUCLEOTIDE SEQUENCE [LARGE SCALE GENOMIC DNA]</scope>
    <source>
        <strain>13 / Type A</strain>
    </source>
</reference>